<protein>
    <recommendedName>
        <fullName evidence="1">Ribosome maturation factor RimP</fullName>
    </recommendedName>
</protein>
<keyword id="KW-0963">Cytoplasm</keyword>
<keyword id="KW-1185">Reference proteome</keyword>
<keyword id="KW-0690">Ribosome biogenesis</keyword>
<gene>
    <name evidence="1" type="primary">rimP</name>
    <name type="ordered locus">BAV2396</name>
</gene>
<feature type="chain" id="PRO_1000064684" description="Ribosome maturation factor RimP">
    <location>
        <begin position="1"/>
        <end position="159"/>
    </location>
</feature>
<evidence type="ECO:0000255" key="1">
    <source>
        <dbReference type="HAMAP-Rule" id="MF_01077"/>
    </source>
</evidence>
<organism>
    <name type="scientific">Bordetella avium (strain 197N)</name>
    <dbReference type="NCBI Taxonomy" id="360910"/>
    <lineage>
        <taxon>Bacteria</taxon>
        <taxon>Pseudomonadati</taxon>
        <taxon>Pseudomonadota</taxon>
        <taxon>Betaproteobacteria</taxon>
        <taxon>Burkholderiales</taxon>
        <taxon>Alcaligenaceae</taxon>
        <taxon>Bordetella</taxon>
    </lineage>
</organism>
<sequence>MADLFALTEEALAGMGIELVDVERAALGLLRVTIDREDGVRIEDCEQVSRQLSRVYEVENIDYKRLEVGSPGVDRPLRNEAEFRRFAGERIEIKLREAVDGRKVFTGILQEADTSADDKTVFGLEFEAKKDDIQVLSFTLDDIERAKLDPVLDFKGKKR</sequence>
<dbReference type="EMBL" id="AM167904">
    <property type="protein sequence ID" value="CAJ50006.1"/>
    <property type="molecule type" value="Genomic_DNA"/>
</dbReference>
<dbReference type="RefSeq" id="WP_012418057.1">
    <property type="nucleotide sequence ID" value="NC_010645.1"/>
</dbReference>
<dbReference type="SMR" id="Q2KXY5"/>
<dbReference type="STRING" id="360910.BAV2396"/>
<dbReference type="GeneID" id="92934429"/>
<dbReference type="KEGG" id="bav:BAV2396"/>
<dbReference type="eggNOG" id="COG0779">
    <property type="taxonomic scope" value="Bacteria"/>
</dbReference>
<dbReference type="HOGENOM" id="CLU_070525_1_0_4"/>
<dbReference type="OrthoDB" id="9805006at2"/>
<dbReference type="Proteomes" id="UP000001977">
    <property type="component" value="Chromosome"/>
</dbReference>
<dbReference type="GO" id="GO:0005829">
    <property type="term" value="C:cytosol"/>
    <property type="evidence" value="ECO:0007669"/>
    <property type="project" value="TreeGrafter"/>
</dbReference>
<dbReference type="GO" id="GO:0000028">
    <property type="term" value="P:ribosomal small subunit assembly"/>
    <property type="evidence" value="ECO:0007669"/>
    <property type="project" value="TreeGrafter"/>
</dbReference>
<dbReference type="GO" id="GO:0006412">
    <property type="term" value="P:translation"/>
    <property type="evidence" value="ECO:0007669"/>
    <property type="project" value="TreeGrafter"/>
</dbReference>
<dbReference type="CDD" id="cd01734">
    <property type="entry name" value="YlxS_C"/>
    <property type="match status" value="1"/>
</dbReference>
<dbReference type="Gene3D" id="2.30.30.180">
    <property type="entry name" value="Ribosome maturation factor RimP, C-terminal domain"/>
    <property type="match status" value="1"/>
</dbReference>
<dbReference type="Gene3D" id="3.30.300.70">
    <property type="entry name" value="RimP-like superfamily, N-terminal"/>
    <property type="match status" value="1"/>
</dbReference>
<dbReference type="HAMAP" id="MF_01077">
    <property type="entry name" value="RimP"/>
    <property type="match status" value="1"/>
</dbReference>
<dbReference type="InterPro" id="IPR003728">
    <property type="entry name" value="Ribosome_maturation_RimP"/>
</dbReference>
<dbReference type="InterPro" id="IPR028998">
    <property type="entry name" value="RimP_C"/>
</dbReference>
<dbReference type="InterPro" id="IPR036847">
    <property type="entry name" value="RimP_C_sf"/>
</dbReference>
<dbReference type="InterPro" id="IPR028989">
    <property type="entry name" value="RimP_N"/>
</dbReference>
<dbReference type="InterPro" id="IPR035956">
    <property type="entry name" value="RimP_N_sf"/>
</dbReference>
<dbReference type="NCBIfam" id="NF000929">
    <property type="entry name" value="PRK00092.2-1"/>
    <property type="match status" value="1"/>
</dbReference>
<dbReference type="PANTHER" id="PTHR33867">
    <property type="entry name" value="RIBOSOME MATURATION FACTOR RIMP"/>
    <property type="match status" value="1"/>
</dbReference>
<dbReference type="PANTHER" id="PTHR33867:SF1">
    <property type="entry name" value="RIBOSOME MATURATION FACTOR RIMP"/>
    <property type="match status" value="1"/>
</dbReference>
<dbReference type="Pfam" id="PF17384">
    <property type="entry name" value="DUF150_C"/>
    <property type="match status" value="1"/>
</dbReference>
<dbReference type="Pfam" id="PF02576">
    <property type="entry name" value="RimP_N"/>
    <property type="match status" value="1"/>
</dbReference>
<dbReference type="SUPFAM" id="SSF74942">
    <property type="entry name" value="YhbC-like, C-terminal domain"/>
    <property type="match status" value="1"/>
</dbReference>
<dbReference type="SUPFAM" id="SSF75420">
    <property type="entry name" value="YhbC-like, N-terminal domain"/>
    <property type="match status" value="1"/>
</dbReference>
<comment type="function">
    <text evidence="1">Required for maturation of 30S ribosomal subunits.</text>
</comment>
<comment type="subcellular location">
    <subcellularLocation>
        <location evidence="1">Cytoplasm</location>
    </subcellularLocation>
</comment>
<comment type="similarity">
    <text evidence="1">Belongs to the RimP family.</text>
</comment>
<accession>Q2KXY5</accession>
<proteinExistence type="inferred from homology"/>
<name>RIMP_BORA1</name>
<reference key="1">
    <citation type="journal article" date="2006" name="J. Bacteriol.">
        <title>Comparison of the genome sequence of the poultry pathogen Bordetella avium with those of B. bronchiseptica, B. pertussis, and B. parapertussis reveals extensive diversity in surface structures associated with host interaction.</title>
        <authorList>
            <person name="Sebaihia M."/>
            <person name="Preston A."/>
            <person name="Maskell D.J."/>
            <person name="Kuzmiak H."/>
            <person name="Connell T.D."/>
            <person name="King N.D."/>
            <person name="Orndorff P.E."/>
            <person name="Miyamoto D.M."/>
            <person name="Thomson N.R."/>
            <person name="Harris D."/>
            <person name="Goble A."/>
            <person name="Lord A."/>
            <person name="Murphy L."/>
            <person name="Quail M.A."/>
            <person name="Rutter S."/>
            <person name="Squares R."/>
            <person name="Squares S."/>
            <person name="Woodward J."/>
            <person name="Parkhill J."/>
            <person name="Temple L.M."/>
        </authorList>
    </citation>
    <scope>NUCLEOTIDE SEQUENCE [LARGE SCALE GENOMIC DNA]</scope>
    <source>
        <strain>197N</strain>
    </source>
</reference>